<dbReference type="EMBL" id="AE008692">
    <property type="protein sequence ID" value="AAV89164.1"/>
    <property type="molecule type" value="Genomic_DNA"/>
</dbReference>
<dbReference type="RefSeq" id="WP_011240446.1">
    <property type="nucleotide sequence ID" value="NZ_CP035711.1"/>
</dbReference>
<dbReference type="SMR" id="Q5NQ41"/>
<dbReference type="STRING" id="264203.ZMO0540"/>
<dbReference type="GeneID" id="79904269"/>
<dbReference type="KEGG" id="zmo:ZMO0540"/>
<dbReference type="eggNOG" id="COG0100">
    <property type="taxonomic scope" value="Bacteria"/>
</dbReference>
<dbReference type="HOGENOM" id="CLU_072439_5_0_5"/>
<dbReference type="Proteomes" id="UP000001173">
    <property type="component" value="Chromosome"/>
</dbReference>
<dbReference type="GO" id="GO:1990904">
    <property type="term" value="C:ribonucleoprotein complex"/>
    <property type="evidence" value="ECO:0007669"/>
    <property type="project" value="UniProtKB-KW"/>
</dbReference>
<dbReference type="GO" id="GO:0005840">
    <property type="term" value="C:ribosome"/>
    <property type="evidence" value="ECO:0007669"/>
    <property type="project" value="UniProtKB-KW"/>
</dbReference>
<dbReference type="GO" id="GO:0019843">
    <property type="term" value="F:rRNA binding"/>
    <property type="evidence" value="ECO:0007669"/>
    <property type="project" value="UniProtKB-UniRule"/>
</dbReference>
<dbReference type="GO" id="GO:0003735">
    <property type="term" value="F:structural constituent of ribosome"/>
    <property type="evidence" value="ECO:0007669"/>
    <property type="project" value="InterPro"/>
</dbReference>
<dbReference type="GO" id="GO:0006412">
    <property type="term" value="P:translation"/>
    <property type="evidence" value="ECO:0007669"/>
    <property type="project" value="UniProtKB-UniRule"/>
</dbReference>
<dbReference type="FunFam" id="3.30.420.80:FF:000001">
    <property type="entry name" value="30S ribosomal protein S11"/>
    <property type="match status" value="1"/>
</dbReference>
<dbReference type="Gene3D" id="3.30.420.80">
    <property type="entry name" value="Ribosomal protein S11"/>
    <property type="match status" value="1"/>
</dbReference>
<dbReference type="HAMAP" id="MF_01310">
    <property type="entry name" value="Ribosomal_uS11"/>
    <property type="match status" value="1"/>
</dbReference>
<dbReference type="InterPro" id="IPR001971">
    <property type="entry name" value="Ribosomal_uS11"/>
</dbReference>
<dbReference type="InterPro" id="IPR019981">
    <property type="entry name" value="Ribosomal_uS11_bac-type"/>
</dbReference>
<dbReference type="InterPro" id="IPR018102">
    <property type="entry name" value="Ribosomal_uS11_CS"/>
</dbReference>
<dbReference type="InterPro" id="IPR036967">
    <property type="entry name" value="Ribosomal_uS11_sf"/>
</dbReference>
<dbReference type="NCBIfam" id="NF003698">
    <property type="entry name" value="PRK05309.1"/>
    <property type="match status" value="1"/>
</dbReference>
<dbReference type="NCBIfam" id="TIGR03632">
    <property type="entry name" value="uS11_bact"/>
    <property type="match status" value="1"/>
</dbReference>
<dbReference type="PANTHER" id="PTHR11759">
    <property type="entry name" value="40S RIBOSOMAL PROTEIN S14/30S RIBOSOMAL PROTEIN S11"/>
    <property type="match status" value="1"/>
</dbReference>
<dbReference type="Pfam" id="PF00411">
    <property type="entry name" value="Ribosomal_S11"/>
    <property type="match status" value="1"/>
</dbReference>
<dbReference type="PIRSF" id="PIRSF002131">
    <property type="entry name" value="Ribosomal_S11"/>
    <property type="match status" value="1"/>
</dbReference>
<dbReference type="SUPFAM" id="SSF53137">
    <property type="entry name" value="Translational machinery components"/>
    <property type="match status" value="1"/>
</dbReference>
<dbReference type="PROSITE" id="PS00054">
    <property type="entry name" value="RIBOSOMAL_S11"/>
    <property type="match status" value="1"/>
</dbReference>
<proteinExistence type="inferred from homology"/>
<reference key="1">
    <citation type="journal article" date="2005" name="Nat. Biotechnol.">
        <title>The genome sequence of the ethanologenic bacterium Zymomonas mobilis ZM4.</title>
        <authorList>
            <person name="Seo J.-S."/>
            <person name="Chong H."/>
            <person name="Park H.S."/>
            <person name="Yoon K.-O."/>
            <person name="Jung C."/>
            <person name="Kim J.J."/>
            <person name="Hong J.H."/>
            <person name="Kim H."/>
            <person name="Kim J.-H."/>
            <person name="Kil J.-I."/>
            <person name="Park C.J."/>
            <person name="Oh H.-M."/>
            <person name="Lee J.-S."/>
            <person name="Jin S.-J."/>
            <person name="Um H.-W."/>
            <person name="Lee H.-J."/>
            <person name="Oh S.-J."/>
            <person name="Kim J.Y."/>
            <person name="Kang H.L."/>
            <person name="Lee S.Y."/>
            <person name="Lee K.J."/>
            <person name="Kang H.S."/>
        </authorList>
    </citation>
    <scope>NUCLEOTIDE SEQUENCE [LARGE SCALE GENOMIC DNA]</scope>
    <source>
        <strain>ATCC 31821 / ZM4 / CP4</strain>
    </source>
</reference>
<sequence length="129" mass="13904">MAREPQRVKRRERKNISAGVAHVNASFNNTMITITDAQGNAISWSSAGMMGFKGSRKSTPYAAQVAAEDAGKKAAEHGVRTLEVEVKGPGSGRESALRALQAVGFHITSIRDVTPIPHNGVRPSKRRRV</sequence>
<evidence type="ECO:0000255" key="1">
    <source>
        <dbReference type="HAMAP-Rule" id="MF_01310"/>
    </source>
</evidence>
<evidence type="ECO:0000305" key="2"/>
<organism>
    <name type="scientific">Zymomonas mobilis subsp. mobilis (strain ATCC 31821 / ZM4 / CP4)</name>
    <dbReference type="NCBI Taxonomy" id="264203"/>
    <lineage>
        <taxon>Bacteria</taxon>
        <taxon>Pseudomonadati</taxon>
        <taxon>Pseudomonadota</taxon>
        <taxon>Alphaproteobacteria</taxon>
        <taxon>Sphingomonadales</taxon>
        <taxon>Zymomonadaceae</taxon>
        <taxon>Zymomonas</taxon>
    </lineage>
</organism>
<protein>
    <recommendedName>
        <fullName evidence="1">Small ribosomal subunit protein uS11</fullName>
    </recommendedName>
    <alternativeName>
        <fullName evidence="2">30S ribosomal protein S11</fullName>
    </alternativeName>
</protein>
<feature type="chain" id="PRO_0000123265" description="Small ribosomal subunit protein uS11">
    <location>
        <begin position="1"/>
        <end position="129"/>
    </location>
</feature>
<name>RS11_ZYMMO</name>
<keyword id="KW-1185">Reference proteome</keyword>
<keyword id="KW-0687">Ribonucleoprotein</keyword>
<keyword id="KW-0689">Ribosomal protein</keyword>
<keyword id="KW-0694">RNA-binding</keyword>
<keyword id="KW-0699">rRNA-binding</keyword>
<gene>
    <name evidence="1" type="primary">rpsK</name>
    <name type="ordered locus">ZMO0540</name>
</gene>
<comment type="function">
    <text evidence="1">Located on the platform of the 30S subunit, it bridges several disparate RNA helices of the 16S rRNA. Forms part of the Shine-Dalgarno cleft in the 70S ribosome.</text>
</comment>
<comment type="subunit">
    <text evidence="1">Part of the 30S ribosomal subunit. Interacts with proteins S7 and S18. Binds to IF-3.</text>
</comment>
<comment type="similarity">
    <text evidence="1">Belongs to the universal ribosomal protein uS11 family.</text>
</comment>
<accession>Q5NQ41</accession>